<protein>
    <recommendedName>
        <fullName>NAD(P)H-hydrate epimerase</fullName>
        <ecNumber>5.1.99.6</ecNumber>
    </recommendedName>
    <alternativeName>
        <fullName>NAD(P)HX epimerase</fullName>
    </alternativeName>
</protein>
<organism>
    <name type="scientific">Giardia intestinalis (strain ATCC 50803 / WB clone C6)</name>
    <name type="common">Giardia lamblia</name>
    <dbReference type="NCBI Taxonomy" id="184922"/>
    <lineage>
        <taxon>Eukaryota</taxon>
        <taxon>Metamonada</taxon>
        <taxon>Diplomonadida</taxon>
        <taxon>Hexamitidae</taxon>
        <taxon>Giardiinae</taxon>
        <taxon>Giardia</taxon>
    </lineage>
</organism>
<accession>A8BQZ5</accession>
<proteinExistence type="inferred from homology"/>
<gene>
    <name type="ORF">GL50803_17366</name>
</gene>
<dbReference type="EC" id="5.1.99.6"/>
<dbReference type="EMBL" id="AACB02000035">
    <property type="protein sequence ID" value="EDO77716.1"/>
    <property type="molecule type" value="Genomic_DNA"/>
</dbReference>
<dbReference type="RefSeq" id="XP_001705390.1">
    <property type="nucleotide sequence ID" value="XM_001705338.1"/>
</dbReference>
<dbReference type="SMR" id="A8BQZ5"/>
<dbReference type="STRING" id="184922.A8BQZ5"/>
<dbReference type="EnsemblProtists" id="EDO77716">
    <property type="protein sequence ID" value="EDO77716"/>
    <property type="gene ID" value="GL50803_17366"/>
</dbReference>
<dbReference type="GeneID" id="5698292"/>
<dbReference type="KEGG" id="gla:GL50803_0017366"/>
<dbReference type="VEuPathDB" id="GiardiaDB:GL50803_17366"/>
<dbReference type="HOGENOM" id="CLU_024853_3_0_1"/>
<dbReference type="OMA" id="SMFRGRY"/>
<dbReference type="GO" id="GO:0046872">
    <property type="term" value="F:metal ion binding"/>
    <property type="evidence" value="ECO:0007669"/>
    <property type="project" value="UniProtKB-KW"/>
</dbReference>
<dbReference type="GO" id="GO:0052856">
    <property type="term" value="F:NAD(P)HX epimerase activity"/>
    <property type="evidence" value="ECO:0007669"/>
    <property type="project" value="UniProtKB-UniRule"/>
</dbReference>
<dbReference type="GO" id="GO:0000166">
    <property type="term" value="F:nucleotide binding"/>
    <property type="evidence" value="ECO:0007669"/>
    <property type="project" value="UniProtKB-KW"/>
</dbReference>
<dbReference type="FunFam" id="3.40.50.10260:FF:000016">
    <property type="entry name" value="Pyridoxamine 5-phosphate oxidase, putative"/>
    <property type="match status" value="1"/>
</dbReference>
<dbReference type="Gene3D" id="3.40.50.10260">
    <property type="entry name" value="YjeF N-terminal domain"/>
    <property type="match status" value="1"/>
</dbReference>
<dbReference type="InterPro" id="IPR004443">
    <property type="entry name" value="YjeF_N_dom"/>
</dbReference>
<dbReference type="InterPro" id="IPR036652">
    <property type="entry name" value="YjeF_N_dom_sf"/>
</dbReference>
<dbReference type="InterPro" id="IPR032976">
    <property type="entry name" value="YJEFN_prot_NAXE-like"/>
</dbReference>
<dbReference type="NCBIfam" id="TIGR00197">
    <property type="entry name" value="yjeF_nterm"/>
    <property type="match status" value="1"/>
</dbReference>
<dbReference type="PANTHER" id="PTHR13232">
    <property type="entry name" value="NAD(P)H-HYDRATE EPIMERASE"/>
    <property type="match status" value="1"/>
</dbReference>
<dbReference type="PANTHER" id="PTHR13232:SF10">
    <property type="entry name" value="NAD(P)H-HYDRATE EPIMERASE"/>
    <property type="match status" value="1"/>
</dbReference>
<dbReference type="Pfam" id="PF03853">
    <property type="entry name" value="YjeF_N"/>
    <property type="match status" value="1"/>
</dbReference>
<dbReference type="SUPFAM" id="SSF64153">
    <property type="entry name" value="YjeF N-terminal domain-like"/>
    <property type="match status" value="1"/>
</dbReference>
<dbReference type="PROSITE" id="PS51385">
    <property type="entry name" value="YJEF_N"/>
    <property type="match status" value="1"/>
</dbReference>
<comment type="function">
    <text evidence="1">Catalyzes the epimerization of the S- and R-forms of NAD(P)HX, a damaged form of NAD(P)H that is a result of enzymatic or heat-dependent hydration. This is a prerequisite for the S-specific NAD(P)H-hydrate dehydratase to allow the repair of both epimers of NAD(P)HX (By similarity).</text>
</comment>
<comment type="catalytic activity">
    <reaction>
        <text>(6R)-NADHX = (6S)-NADHX</text>
        <dbReference type="Rhea" id="RHEA:32215"/>
        <dbReference type="ChEBI" id="CHEBI:64074"/>
        <dbReference type="ChEBI" id="CHEBI:64075"/>
        <dbReference type="EC" id="5.1.99.6"/>
    </reaction>
</comment>
<comment type="catalytic activity">
    <reaction>
        <text>(6R)-NADPHX = (6S)-NADPHX</text>
        <dbReference type="Rhea" id="RHEA:32227"/>
        <dbReference type="ChEBI" id="CHEBI:64076"/>
        <dbReference type="ChEBI" id="CHEBI:64077"/>
        <dbReference type="EC" id="5.1.99.6"/>
    </reaction>
</comment>
<comment type="cofactor">
    <cofactor evidence="1">
        <name>K(+)</name>
        <dbReference type="ChEBI" id="CHEBI:29103"/>
    </cofactor>
    <text evidence="1">Binds 1 potassium ion per subunit.</text>
</comment>
<comment type="similarity">
    <text evidence="3">Belongs to the NnrE/AIBP family.</text>
</comment>
<feature type="chain" id="PRO_0000416329" description="NAD(P)H-hydrate epimerase">
    <location>
        <begin position="1"/>
        <end position="273"/>
    </location>
</feature>
<feature type="domain" description="YjeF N-terminal" evidence="2">
    <location>
        <begin position="18"/>
        <end position="257"/>
    </location>
</feature>
<feature type="binding site" evidence="1">
    <location>
        <begin position="71"/>
        <end position="75"/>
    </location>
    <ligand>
        <name>(6S)-NADPHX</name>
        <dbReference type="ChEBI" id="CHEBI:64076"/>
    </ligand>
</feature>
<feature type="binding site" evidence="1">
    <location>
        <position position="72"/>
    </location>
    <ligand>
        <name>K(+)</name>
        <dbReference type="ChEBI" id="CHEBI:29103"/>
    </ligand>
</feature>
<feature type="binding site" evidence="1">
    <location>
        <position position="146"/>
    </location>
    <ligand>
        <name>K(+)</name>
        <dbReference type="ChEBI" id="CHEBI:29103"/>
    </ligand>
</feature>
<feature type="binding site" evidence="1">
    <location>
        <begin position="150"/>
        <end position="157"/>
    </location>
    <ligand>
        <name>(6S)-NADPHX</name>
        <dbReference type="ChEBI" id="CHEBI:64076"/>
    </ligand>
</feature>
<feature type="binding site" evidence="1">
    <location>
        <position position="162"/>
    </location>
    <ligand>
        <name>(6S)-NADPHX</name>
        <dbReference type="ChEBI" id="CHEBI:64076"/>
    </ligand>
</feature>
<feature type="binding site" evidence="1">
    <location>
        <position position="188"/>
    </location>
    <ligand>
        <name>(6S)-NADPHX</name>
        <dbReference type="ChEBI" id="CHEBI:64076"/>
    </ligand>
</feature>
<feature type="binding site" evidence="1">
    <location>
        <position position="191"/>
    </location>
    <ligand>
        <name>K(+)</name>
        <dbReference type="ChEBI" id="CHEBI:29103"/>
    </ligand>
</feature>
<sequence>MQQAQQKPFIPTIPAYQALKLDEDLINKCNYSIEQLMEIAGTAVAQATTHYIESTSSVSKAGVLVVCGPGNNGGDGLVAARHLSSGSMSSATVRVWLPKEPSSSVNKRMLSIAKHAGVVFIKDTNEEALHAILEFINSCESFYLVDAIFGFSFHGGPIKPPYDTVINTLLQMQTSMAIGPKTRIVSVDVPSGWSVDAQEWGLNTDKELIPDGLLRPDALISLTVPKNCSLWLPPGTAHYLGGNFLTPLLAMEYDVQEIQHYWSGVSSLFVVLS</sequence>
<name>NNRE_GIAIC</name>
<reference key="1">
    <citation type="journal article" date="2007" name="Science">
        <title>Genomic minimalism in the early diverging intestinal parasite Giardia lamblia.</title>
        <authorList>
            <person name="Morrison H.G."/>
            <person name="McArthur A.G."/>
            <person name="Gillin F.D."/>
            <person name="Aley S.B."/>
            <person name="Adam R.D."/>
            <person name="Olsen G.J."/>
            <person name="Best A.A."/>
            <person name="Cande W.Z."/>
            <person name="Chen F."/>
            <person name="Cipriano M.J."/>
            <person name="Davids B.J."/>
            <person name="Dawson S.C."/>
            <person name="Elmendorf H.G."/>
            <person name="Hehl A.B."/>
            <person name="Holder M.E."/>
            <person name="Huse S.M."/>
            <person name="Kim U.U."/>
            <person name="Lasek-Nesselquist E."/>
            <person name="Manning G."/>
            <person name="Nigam A."/>
            <person name="Nixon J.E.J."/>
            <person name="Palm D."/>
            <person name="Passamaneck N.E."/>
            <person name="Prabhu A."/>
            <person name="Reich C.I."/>
            <person name="Reiner D.S."/>
            <person name="Samuelson J."/>
            <person name="Svard S.G."/>
            <person name="Sogin M.L."/>
        </authorList>
    </citation>
    <scope>NUCLEOTIDE SEQUENCE [LARGE SCALE GENOMIC DNA]</scope>
    <source>
        <strain>ATCC 50803 / WB clone C6</strain>
    </source>
</reference>
<keyword id="KW-0413">Isomerase</keyword>
<keyword id="KW-0479">Metal-binding</keyword>
<keyword id="KW-0520">NAD</keyword>
<keyword id="KW-0521">NADP</keyword>
<keyword id="KW-0547">Nucleotide-binding</keyword>
<keyword id="KW-0630">Potassium</keyword>
<evidence type="ECO:0000250" key="1"/>
<evidence type="ECO:0000255" key="2">
    <source>
        <dbReference type="PROSITE-ProRule" id="PRU00719"/>
    </source>
</evidence>
<evidence type="ECO:0000305" key="3"/>